<evidence type="ECO:0000255" key="1">
    <source>
        <dbReference type="HAMAP-Rule" id="MF_00113"/>
    </source>
</evidence>
<gene>
    <name evidence="1" type="primary">queA</name>
    <name type="ordered locus">Bcep1808_0684</name>
</gene>
<sequence>MFTLSDFDFNLPPELIAQTALPERTASRLLEVDGTVAPARLVDRRFAELPSCIARGDLLVFNDTKVLKARFFGQKASGGKIEVLVERVTGTHTALAQIRASKSPGAGTTLRLADAFDVTVGERVEPFFTLHFPQPCLTLIEQYGRLPLPPYIEHDADATDETRYQTVYASNPGAVAAPTAGLHFDQPLLEKLDAMGVERATLTLHVGAGTFQPVRVENIAEHRMHSEWYDLPQSLVDKIAATRARGGNVIAVGTTSMRALEAAARSAEAAGRPLAATQDETDIFITPGYRFRVVDRLVTNFHLPKSTLLMLVSAFAGVETIRAAYRHAIDERYRFFSYGDAMLLTRRDTPEHA</sequence>
<organism>
    <name type="scientific">Burkholderia vietnamiensis (strain G4 / LMG 22486)</name>
    <name type="common">Burkholderia cepacia (strain R1808)</name>
    <dbReference type="NCBI Taxonomy" id="269482"/>
    <lineage>
        <taxon>Bacteria</taxon>
        <taxon>Pseudomonadati</taxon>
        <taxon>Pseudomonadota</taxon>
        <taxon>Betaproteobacteria</taxon>
        <taxon>Burkholderiales</taxon>
        <taxon>Burkholderiaceae</taxon>
        <taxon>Burkholderia</taxon>
        <taxon>Burkholderia cepacia complex</taxon>
    </lineage>
</organism>
<name>QUEA_BURVG</name>
<protein>
    <recommendedName>
        <fullName evidence="1">S-adenosylmethionine:tRNA ribosyltransferase-isomerase</fullName>
        <ecNumber evidence="1">2.4.99.17</ecNumber>
    </recommendedName>
    <alternativeName>
        <fullName evidence="1">Queuosine biosynthesis protein QueA</fullName>
    </alternativeName>
</protein>
<reference key="1">
    <citation type="submission" date="2007-03" db="EMBL/GenBank/DDBJ databases">
        <title>Complete sequence of chromosome 1 of Burkholderia vietnamiensis G4.</title>
        <authorList>
            <consortium name="US DOE Joint Genome Institute"/>
            <person name="Copeland A."/>
            <person name="Lucas S."/>
            <person name="Lapidus A."/>
            <person name="Barry K."/>
            <person name="Detter J.C."/>
            <person name="Glavina del Rio T."/>
            <person name="Hammon N."/>
            <person name="Israni S."/>
            <person name="Dalin E."/>
            <person name="Tice H."/>
            <person name="Pitluck S."/>
            <person name="Chain P."/>
            <person name="Malfatti S."/>
            <person name="Shin M."/>
            <person name="Vergez L."/>
            <person name="Schmutz J."/>
            <person name="Larimer F."/>
            <person name="Land M."/>
            <person name="Hauser L."/>
            <person name="Kyrpides N."/>
            <person name="Tiedje J."/>
            <person name="Richardson P."/>
        </authorList>
    </citation>
    <scope>NUCLEOTIDE SEQUENCE [LARGE SCALE GENOMIC DNA]</scope>
    <source>
        <strain>G4 / LMG 22486</strain>
    </source>
</reference>
<dbReference type="EC" id="2.4.99.17" evidence="1"/>
<dbReference type="EMBL" id="CP000614">
    <property type="protein sequence ID" value="ABO53696.1"/>
    <property type="molecule type" value="Genomic_DNA"/>
</dbReference>
<dbReference type="SMR" id="A4JBP3"/>
<dbReference type="KEGG" id="bvi:Bcep1808_0684"/>
<dbReference type="eggNOG" id="COG0809">
    <property type="taxonomic scope" value="Bacteria"/>
</dbReference>
<dbReference type="HOGENOM" id="CLU_039110_1_0_4"/>
<dbReference type="UniPathway" id="UPA00392"/>
<dbReference type="Proteomes" id="UP000002287">
    <property type="component" value="Chromosome 1"/>
</dbReference>
<dbReference type="GO" id="GO:0005737">
    <property type="term" value="C:cytoplasm"/>
    <property type="evidence" value="ECO:0007669"/>
    <property type="project" value="UniProtKB-SubCell"/>
</dbReference>
<dbReference type="GO" id="GO:0051075">
    <property type="term" value="F:S-adenosylmethionine:tRNA ribosyltransferase-isomerase activity"/>
    <property type="evidence" value="ECO:0007669"/>
    <property type="project" value="UniProtKB-EC"/>
</dbReference>
<dbReference type="GO" id="GO:0008616">
    <property type="term" value="P:queuosine biosynthetic process"/>
    <property type="evidence" value="ECO:0007669"/>
    <property type="project" value="UniProtKB-UniRule"/>
</dbReference>
<dbReference type="GO" id="GO:0002099">
    <property type="term" value="P:tRNA wobble guanine modification"/>
    <property type="evidence" value="ECO:0007669"/>
    <property type="project" value="TreeGrafter"/>
</dbReference>
<dbReference type="FunFam" id="3.40.1780.10:FF:000001">
    <property type="entry name" value="S-adenosylmethionine:tRNA ribosyltransferase-isomerase"/>
    <property type="match status" value="1"/>
</dbReference>
<dbReference type="Gene3D" id="2.40.10.240">
    <property type="entry name" value="QueA-like"/>
    <property type="match status" value="1"/>
</dbReference>
<dbReference type="Gene3D" id="3.40.1780.10">
    <property type="entry name" value="QueA-like"/>
    <property type="match status" value="1"/>
</dbReference>
<dbReference type="HAMAP" id="MF_00113">
    <property type="entry name" value="QueA"/>
    <property type="match status" value="1"/>
</dbReference>
<dbReference type="InterPro" id="IPR003699">
    <property type="entry name" value="QueA"/>
</dbReference>
<dbReference type="InterPro" id="IPR042118">
    <property type="entry name" value="QueA_dom1"/>
</dbReference>
<dbReference type="InterPro" id="IPR042119">
    <property type="entry name" value="QueA_dom2"/>
</dbReference>
<dbReference type="InterPro" id="IPR036100">
    <property type="entry name" value="QueA_sf"/>
</dbReference>
<dbReference type="NCBIfam" id="NF001140">
    <property type="entry name" value="PRK00147.1"/>
    <property type="match status" value="1"/>
</dbReference>
<dbReference type="NCBIfam" id="TIGR00113">
    <property type="entry name" value="queA"/>
    <property type="match status" value="1"/>
</dbReference>
<dbReference type="PANTHER" id="PTHR30307">
    <property type="entry name" value="S-ADENOSYLMETHIONINE:TRNA RIBOSYLTRANSFERASE-ISOMERASE"/>
    <property type="match status" value="1"/>
</dbReference>
<dbReference type="PANTHER" id="PTHR30307:SF0">
    <property type="entry name" value="S-ADENOSYLMETHIONINE:TRNA RIBOSYLTRANSFERASE-ISOMERASE"/>
    <property type="match status" value="1"/>
</dbReference>
<dbReference type="Pfam" id="PF02547">
    <property type="entry name" value="Queuosine_synth"/>
    <property type="match status" value="1"/>
</dbReference>
<dbReference type="SUPFAM" id="SSF111337">
    <property type="entry name" value="QueA-like"/>
    <property type="match status" value="1"/>
</dbReference>
<keyword id="KW-0963">Cytoplasm</keyword>
<keyword id="KW-0671">Queuosine biosynthesis</keyword>
<keyword id="KW-0949">S-adenosyl-L-methionine</keyword>
<keyword id="KW-0808">Transferase</keyword>
<comment type="function">
    <text evidence="1">Transfers and isomerizes the ribose moiety from AdoMet to the 7-aminomethyl group of 7-deazaguanine (preQ1-tRNA) to give epoxyqueuosine (oQ-tRNA).</text>
</comment>
<comment type="catalytic activity">
    <reaction evidence="1">
        <text>7-aminomethyl-7-carbaguanosine(34) in tRNA + S-adenosyl-L-methionine = epoxyqueuosine(34) in tRNA + adenine + L-methionine + 2 H(+)</text>
        <dbReference type="Rhea" id="RHEA:32155"/>
        <dbReference type="Rhea" id="RHEA-COMP:10342"/>
        <dbReference type="Rhea" id="RHEA-COMP:18582"/>
        <dbReference type="ChEBI" id="CHEBI:15378"/>
        <dbReference type="ChEBI" id="CHEBI:16708"/>
        <dbReference type="ChEBI" id="CHEBI:57844"/>
        <dbReference type="ChEBI" id="CHEBI:59789"/>
        <dbReference type="ChEBI" id="CHEBI:82833"/>
        <dbReference type="ChEBI" id="CHEBI:194443"/>
        <dbReference type="EC" id="2.4.99.17"/>
    </reaction>
</comment>
<comment type="pathway">
    <text evidence="1">tRNA modification; tRNA-queuosine biosynthesis.</text>
</comment>
<comment type="subunit">
    <text evidence="1">Monomer.</text>
</comment>
<comment type="subcellular location">
    <subcellularLocation>
        <location evidence="1">Cytoplasm</location>
    </subcellularLocation>
</comment>
<comment type="similarity">
    <text evidence="1">Belongs to the QueA family.</text>
</comment>
<feature type="chain" id="PRO_1000015193" description="S-adenosylmethionine:tRNA ribosyltransferase-isomerase">
    <location>
        <begin position="1"/>
        <end position="353"/>
    </location>
</feature>
<proteinExistence type="inferred from homology"/>
<accession>A4JBP3</accession>